<evidence type="ECO:0000250" key="1"/>
<evidence type="ECO:0000250" key="2">
    <source>
        <dbReference type="UniProtKB" id="P11653"/>
    </source>
</evidence>
<evidence type="ECO:0000255" key="3">
    <source>
        <dbReference type="PROSITE-ProRule" id="PRU00666"/>
    </source>
</evidence>
<evidence type="ECO:0000305" key="4"/>
<feature type="chain" id="PRO_0000194272" description="Methylmalonyl-CoA mutase large subunit">
    <location>
        <begin position="1"/>
        <end position="715"/>
    </location>
</feature>
<feature type="domain" description="B12-binding" evidence="3">
    <location>
        <begin position="587"/>
        <end position="715"/>
    </location>
</feature>
<feature type="binding site" evidence="2">
    <location>
        <position position="70"/>
    </location>
    <ligand>
        <name>(R)-methylmalonyl-CoA</name>
        <dbReference type="ChEBI" id="CHEBI:57326"/>
    </ligand>
</feature>
<feature type="binding site" evidence="2">
    <location>
        <position position="73"/>
    </location>
    <ligand>
        <name>(R)-methylmalonyl-CoA</name>
        <dbReference type="ChEBI" id="CHEBI:57326"/>
    </ligand>
</feature>
<feature type="binding site" evidence="2">
    <location>
        <position position="77"/>
    </location>
    <ligand>
        <name>(R)-methylmalonyl-CoA</name>
        <dbReference type="ChEBI" id="CHEBI:57326"/>
    </ligand>
</feature>
<feature type="binding site" evidence="2">
    <location>
        <position position="80"/>
    </location>
    <ligand>
        <name>(R)-methylmalonyl-CoA</name>
        <dbReference type="ChEBI" id="CHEBI:57326"/>
    </ligand>
</feature>
<feature type="binding site" evidence="2">
    <location>
        <position position="82"/>
    </location>
    <ligand>
        <name>(R)-methylmalonyl-CoA</name>
        <dbReference type="ChEBI" id="CHEBI:57326"/>
    </ligand>
</feature>
<feature type="binding site" evidence="2">
    <location>
        <position position="84"/>
    </location>
    <ligand>
        <name>(R)-methylmalonyl-CoA</name>
        <dbReference type="ChEBI" id="CHEBI:57326"/>
    </ligand>
</feature>
<feature type="binding site" evidence="2">
    <location>
        <position position="109"/>
    </location>
    <ligand>
        <name>(R)-methylmalonyl-CoA</name>
        <dbReference type="ChEBI" id="CHEBI:57326"/>
    </ligand>
</feature>
<feature type="binding site" evidence="2">
    <location>
        <position position="112"/>
    </location>
    <ligand>
        <name>cob(II)alamin</name>
        <dbReference type="ChEBI" id="CHEBI:16304"/>
    </ligand>
</feature>
<feature type="binding site" evidence="2">
    <location>
        <position position="134"/>
    </location>
    <ligand>
        <name>cob(II)alamin</name>
        <dbReference type="ChEBI" id="CHEBI:16304"/>
    </ligand>
</feature>
<feature type="binding site" evidence="2">
    <location>
        <position position="190"/>
    </location>
    <ligand>
        <name>(R)-methylmalonyl-CoA</name>
        <dbReference type="ChEBI" id="CHEBI:57326"/>
    </ligand>
</feature>
<feature type="binding site" evidence="2">
    <location>
        <position position="192"/>
    </location>
    <ligand>
        <name>(R)-methylmalonyl-CoA</name>
        <dbReference type="ChEBI" id="CHEBI:57326"/>
    </ligand>
</feature>
<feature type="binding site" evidence="2">
    <location>
        <position position="201"/>
    </location>
    <ligand>
        <name>cob(II)alamin</name>
        <dbReference type="ChEBI" id="CHEBI:16304"/>
    </ligand>
</feature>
<feature type="binding site" evidence="2">
    <location>
        <position position="202"/>
    </location>
    <ligand>
        <name>(R)-methylmalonyl-CoA</name>
        <dbReference type="ChEBI" id="CHEBI:57326"/>
    </ligand>
</feature>
<feature type="binding site" evidence="2">
    <location>
        <position position="202"/>
    </location>
    <ligand>
        <name>cob(II)alamin</name>
        <dbReference type="ChEBI" id="CHEBI:16304"/>
    </ligand>
</feature>
<feature type="binding site" evidence="2">
    <location>
        <position position="239"/>
    </location>
    <ligand>
        <name>(R)-methylmalonyl-CoA</name>
        <dbReference type="ChEBI" id="CHEBI:57326"/>
    </ligand>
</feature>
<feature type="binding site" evidence="2">
    <location>
        <position position="278"/>
    </location>
    <ligand>
        <name>(R)-methylmalonyl-CoA</name>
        <dbReference type="ChEBI" id="CHEBI:57326"/>
    </ligand>
</feature>
<feature type="binding site" evidence="2">
    <location>
        <position position="280"/>
    </location>
    <ligand>
        <name>(R)-methylmalonyl-CoA</name>
        <dbReference type="ChEBI" id="CHEBI:57326"/>
    </ligand>
</feature>
<feature type="binding site" evidence="2">
    <location>
        <position position="328"/>
    </location>
    <ligand>
        <name>cob(II)alamin</name>
        <dbReference type="ChEBI" id="CHEBI:16304"/>
    </ligand>
</feature>
<feature type="binding site" evidence="2">
    <location>
        <position position="365"/>
    </location>
    <ligand>
        <name>cob(II)alamin</name>
        <dbReference type="ChEBI" id="CHEBI:16304"/>
    </ligand>
</feature>
<feature type="binding site" evidence="2">
    <location>
        <position position="368"/>
    </location>
    <ligand>
        <name>cob(II)alamin</name>
        <dbReference type="ChEBI" id="CHEBI:16304"/>
    </ligand>
</feature>
<feature type="binding site" evidence="2">
    <location>
        <position position="599"/>
    </location>
    <ligand>
        <name>cob(II)alamin</name>
        <dbReference type="ChEBI" id="CHEBI:16304"/>
    </ligand>
</feature>
<feature type="binding site" description="axial binding residue" evidence="2">
    <location>
        <position position="600"/>
    </location>
    <ligand>
        <name>cob(II)alamin</name>
        <dbReference type="ChEBI" id="CHEBI:16304"/>
    </ligand>
    <ligandPart>
        <name>Co</name>
        <dbReference type="ChEBI" id="CHEBI:27638"/>
    </ligandPart>
</feature>
<feature type="binding site" evidence="2">
    <location>
        <position position="601"/>
    </location>
    <ligand>
        <name>cob(II)alamin</name>
        <dbReference type="ChEBI" id="CHEBI:16304"/>
    </ligand>
</feature>
<feature type="binding site" evidence="2">
    <location>
        <position position="602"/>
    </location>
    <ligand>
        <name>cob(II)alamin</name>
        <dbReference type="ChEBI" id="CHEBI:16304"/>
    </ligand>
</feature>
<feature type="binding site" evidence="2">
    <location>
        <position position="645"/>
    </location>
    <ligand>
        <name>cob(II)alamin</name>
        <dbReference type="ChEBI" id="CHEBI:16304"/>
    </ligand>
</feature>
<feature type="binding site" evidence="2">
    <location>
        <position position="647"/>
    </location>
    <ligand>
        <name>cob(II)alamin</name>
        <dbReference type="ChEBI" id="CHEBI:16304"/>
    </ligand>
</feature>
<feature type="binding site" evidence="2">
    <location>
        <position position="676"/>
    </location>
    <ligand>
        <name>cob(II)alamin</name>
        <dbReference type="ChEBI" id="CHEBI:16304"/>
    </ligand>
</feature>
<feature type="binding site" evidence="2">
    <location>
        <position position="699"/>
    </location>
    <ligand>
        <name>cob(II)alamin</name>
        <dbReference type="ChEBI" id="CHEBI:16304"/>
    </ligand>
</feature>
<feature type="site" description="Transition state stabilizer" evidence="2">
    <location>
        <position position="84"/>
    </location>
</feature>
<dbReference type="EC" id="5.4.99.2"/>
<dbReference type="EMBL" id="L30136">
    <property type="protein sequence ID" value="AAB51084.1"/>
    <property type="molecule type" value="Genomic_DNA"/>
</dbReference>
<dbReference type="EMBL" id="AE015924">
    <property type="protein sequence ID" value="AAQ66676.1"/>
    <property type="molecule type" value="Genomic_DNA"/>
</dbReference>
<dbReference type="PIR" id="JC4560">
    <property type="entry name" value="JC4560"/>
</dbReference>
<dbReference type="RefSeq" id="WP_005875477.1">
    <property type="nucleotide sequence ID" value="NC_002950.2"/>
</dbReference>
<dbReference type="SMR" id="Q59677"/>
<dbReference type="STRING" id="242619.PG_1657"/>
<dbReference type="EnsemblBacteria" id="AAQ66676">
    <property type="protein sequence ID" value="AAQ66676"/>
    <property type="gene ID" value="PG_1657"/>
</dbReference>
<dbReference type="KEGG" id="pgi:PG_1657"/>
<dbReference type="eggNOG" id="COG1884">
    <property type="taxonomic scope" value="Bacteria"/>
</dbReference>
<dbReference type="eggNOG" id="COG2185">
    <property type="taxonomic scope" value="Bacteria"/>
</dbReference>
<dbReference type="HOGENOM" id="CLU_009523_3_1_10"/>
<dbReference type="Proteomes" id="UP000000588">
    <property type="component" value="Chromosome"/>
</dbReference>
<dbReference type="GO" id="GO:0005737">
    <property type="term" value="C:cytoplasm"/>
    <property type="evidence" value="ECO:0007669"/>
    <property type="project" value="TreeGrafter"/>
</dbReference>
<dbReference type="GO" id="GO:0031419">
    <property type="term" value="F:cobalamin binding"/>
    <property type="evidence" value="ECO:0007669"/>
    <property type="project" value="UniProtKB-KW"/>
</dbReference>
<dbReference type="GO" id="GO:0046872">
    <property type="term" value="F:metal ion binding"/>
    <property type="evidence" value="ECO:0007669"/>
    <property type="project" value="UniProtKB-KW"/>
</dbReference>
<dbReference type="GO" id="GO:0004494">
    <property type="term" value="F:methylmalonyl-CoA mutase activity"/>
    <property type="evidence" value="ECO:0007669"/>
    <property type="project" value="UniProtKB-EC"/>
</dbReference>
<dbReference type="GO" id="GO:0019678">
    <property type="term" value="P:propionate metabolic process, methylmalonyl pathway"/>
    <property type="evidence" value="ECO:0007669"/>
    <property type="project" value="TreeGrafter"/>
</dbReference>
<dbReference type="CDD" id="cd02071">
    <property type="entry name" value="MM_CoA_mut_B12_BD"/>
    <property type="match status" value="1"/>
</dbReference>
<dbReference type="CDD" id="cd03679">
    <property type="entry name" value="MM_CoA_mutase_alpha_like"/>
    <property type="match status" value="1"/>
</dbReference>
<dbReference type="FunFam" id="3.40.50.280:FF:000002">
    <property type="entry name" value="Methylmalonyl-CoA mutase, mitochondrial"/>
    <property type="match status" value="1"/>
</dbReference>
<dbReference type="FunFam" id="3.20.20.240:FF:000001">
    <property type="entry name" value="Probable methylmalonyl-coa mutase"/>
    <property type="match status" value="1"/>
</dbReference>
<dbReference type="Gene3D" id="3.40.50.280">
    <property type="entry name" value="Cobalamin-binding domain"/>
    <property type="match status" value="1"/>
</dbReference>
<dbReference type="Gene3D" id="3.20.20.240">
    <property type="entry name" value="Methylmalonyl-CoA mutase"/>
    <property type="match status" value="1"/>
</dbReference>
<dbReference type="InterPro" id="IPR006159">
    <property type="entry name" value="Acid_CoA_mut_C"/>
</dbReference>
<dbReference type="InterPro" id="IPR016176">
    <property type="entry name" value="Cbl-dep_enz_cat"/>
</dbReference>
<dbReference type="InterPro" id="IPR006158">
    <property type="entry name" value="Cobalamin-bd"/>
</dbReference>
<dbReference type="InterPro" id="IPR036724">
    <property type="entry name" value="Cobalamin-bd_sf"/>
</dbReference>
<dbReference type="InterPro" id="IPR006099">
    <property type="entry name" value="MeMalonylCoA_mutase_a/b_cat"/>
</dbReference>
<dbReference type="InterPro" id="IPR006098">
    <property type="entry name" value="MMCoA_mutase_a_cat"/>
</dbReference>
<dbReference type="NCBIfam" id="TIGR00640">
    <property type="entry name" value="acid_CoA_mut_C"/>
    <property type="match status" value="1"/>
</dbReference>
<dbReference type="NCBIfam" id="TIGR00641">
    <property type="entry name" value="acid_CoA_mut_N"/>
    <property type="match status" value="1"/>
</dbReference>
<dbReference type="NCBIfam" id="NF006944">
    <property type="entry name" value="PRK09426.1"/>
    <property type="match status" value="1"/>
</dbReference>
<dbReference type="PANTHER" id="PTHR48101:SF4">
    <property type="entry name" value="METHYLMALONYL-COA MUTASE, MITOCHONDRIAL"/>
    <property type="match status" value="1"/>
</dbReference>
<dbReference type="PANTHER" id="PTHR48101">
    <property type="entry name" value="METHYLMALONYL-COA MUTASE, MITOCHONDRIAL-RELATED"/>
    <property type="match status" value="1"/>
</dbReference>
<dbReference type="Pfam" id="PF02310">
    <property type="entry name" value="B12-binding"/>
    <property type="match status" value="1"/>
</dbReference>
<dbReference type="Pfam" id="PF01642">
    <property type="entry name" value="MM_CoA_mutase"/>
    <property type="match status" value="1"/>
</dbReference>
<dbReference type="SUPFAM" id="SSF52242">
    <property type="entry name" value="Cobalamin (vitamin B12)-binding domain"/>
    <property type="match status" value="1"/>
</dbReference>
<dbReference type="SUPFAM" id="SSF51703">
    <property type="entry name" value="Cobalamin (vitamin B12)-dependent enzymes"/>
    <property type="match status" value="1"/>
</dbReference>
<dbReference type="PROSITE" id="PS51332">
    <property type="entry name" value="B12_BINDING"/>
    <property type="match status" value="1"/>
</dbReference>
<dbReference type="PROSITE" id="PS00544">
    <property type="entry name" value="METMALONYL_COA_MUTASE"/>
    <property type="match status" value="1"/>
</dbReference>
<comment type="function">
    <text evidence="1">Catalyzes the isomerization of succinyl-CoA to methylmalonyl-CoA during synthesis of propionate from tricarboxylic acid-cycle intermediates.</text>
</comment>
<comment type="catalytic activity">
    <reaction>
        <text>(R)-methylmalonyl-CoA = succinyl-CoA</text>
        <dbReference type="Rhea" id="RHEA:22888"/>
        <dbReference type="ChEBI" id="CHEBI:57292"/>
        <dbReference type="ChEBI" id="CHEBI:57326"/>
        <dbReference type="EC" id="5.4.99.2"/>
    </reaction>
</comment>
<comment type="cofactor">
    <cofactor>
        <name>adenosylcob(III)alamin</name>
        <dbReference type="ChEBI" id="CHEBI:18408"/>
    </cofactor>
</comment>
<comment type="subunit">
    <text>Heterodimer of an alpha and a beta chain.</text>
</comment>
<comment type="similarity">
    <text evidence="4">Belongs to the methylmalonyl-CoA mutase family.</text>
</comment>
<accession>Q59677</accession>
<keyword id="KW-0846">Cobalamin</keyword>
<keyword id="KW-0170">Cobalt</keyword>
<keyword id="KW-0413">Isomerase</keyword>
<keyword id="KW-0479">Metal-binding</keyword>
<keyword id="KW-1185">Reference proteome</keyword>
<sequence>MKPNYKDIDIKSAGFVAKDATRWAEEKGIVADWRTPEQIMVKPLYTKDDLEGMEHLDYVSGLPPFLRGPYSGMYPMRPWTIRQYAGFSTAEESNAFYRRNLASGQKGLSVAFDLATHRGYDADHSRVVGDVGKAGVSICSLEDMKVLFDGIPLSKMSVSMTMNGAVLPILAFYINAGLEQGAKLEEMAGTIQNDILKEFMVRNTYIYPPEFSMRIIADIFEYTSQNMPKFNSISISGYHMQEAGATADIEMAYTLADGMQYLKAGIDAGIDVDAFAPRLSFFWAIGVNHFMEIAKMRAARLLWAKIVKSFGAKNPKSLALRTHSQTSGWSLTEQDPFNNVGRTCIEAMAAALGHTQSLHTNALDEAIALPTDFSARIARNTQIYIQEETLVCKEIDPWGGSYYVESLTNELVHKAWTLIKEVQEMGGMAKAIETGLPKLRIEEAAARTQARIDSHQQVIVGVNKYRLPKEDPIDILEIDNTAVRKQQIERLNDLRSHRDEKAVQEALEAITKCVETKEGNLLDLAVKAAGLRASLGEISDACEKVVGRYKAVIRTISGVYSSESGEDKDFAHAKELAEKFAKKEGRQPRIMIAKMGQDGHDRGAKVVATGYADCGFDVDMGPLFQTPEEAARQAVENDVHVMGVSSLAAGHKTLIPQVIAELEKLGRPDILVTAGGVIPAQDYDFLYQAGVAAIFGPGTPVAYSAAKVLEILLEE</sequence>
<protein>
    <recommendedName>
        <fullName>Methylmalonyl-CoA mutase large subunit</fullName>
        <ecNumber>5.4.99.2</ecNumber>
    </recommendedName>
    <alternativeName>
        <fullName>MCM-alpha</fullName>
    </alternativeName>
</protein>
<gene>
    <name type="primary">mutB</name>
    <name type="synonym">mcmB</name>
    <name type="ordered locus">PG_1657</name>
</gene>
<reference key="1">
    <citation type="journal article" date="1995" name="Gene">
        <title>Cloning, expression and sequence analysis of the genes encoding the heterodimeric methylmalonyl-CoA mutase of Porphyromonas gingivalis W50.</title>
        <authorList>
            <person name="Jackson C.A."/>
            <person name="Kirzbaum L."/>
            <person name="Dashper S."/>
            <person name="Reynolds E.C."/>
        </authorList>
    </citation>
    <scope>NUCLEOTIDE SEQUENCE [GENOMIC DNA]</scope>
    <source>
        <strain>ATCC 53978 / W50</strain>
    </source>
</reference>
<reference key="2">
    <citation type="journal article" date="2003" name="J. Bacteriol.">
        <title>Complete genome sequence of the oral pathogenic bacterium Porphyromonas gingivalis strain W83.</title>
        <authorList>
            <person name="Nelson K.E."/>
            <person name="Fleischmann R.D."/>
            <person name="DeBoy R.T."/>
            <person name="Paulsen I.T."/>
            <person name="Fouts D.E."/>
            <person name="Eisen J.A."/>
            <person name="Daugherty S.C."/>
            <person name="Dodson R.J."/>
            <person name="Durkin A.S."/>
            <person name="Gwinn M.L."/>
            <person name="Haft D.H."/>
            <person name="Kolonay J.F."/>
            <person name="Nelson W.C."/>
            <person name="Mason T.M."/>
            <person name="Tallon L."/>
            <person name="Gray J."/>
            <person name="Granger D."/>
            <person name="Tettelin H."/>
            <person name="Dong H."/>
            <person name="Galvin J.L."/>
            <person name="Duncan M.J."/>
            <person name="Dewhirst F.E."/>
            <person name="Fraser C.M."/>
        </authorList>
    </citation>
    <scope>NUCLEOTIDE SEQUENCE [LARGE SCALE GENOMIC DNA]</scope>
    <source>
        <strain>ATCC BAA-308 / W83</strain>
    </source>
</reference>
<proteinExistence type="inferred from homology"/>
<name>MUTB_PORGI</name>
<organism>
    <name type="scientific">Porphyromonas gingivalis (strain ATCC BAA-308 / W83)</name>
    <dbReference type="NCBI Taxonomy" id="242619"/>
    <lineage>
        <taxon>Bacteria</taxon>
        <taxon>Pseudomonadati</taxon>
        <taxon>Bacteroidota</taxon>
        <taxon>Bacteroidia</taxon>
        <taxon>Bacteroidales</taxon>
        <taxon>Porphyromonadaceae</taxon>
        <taxon>Porphyromonas</taxon>
    </lineage>
</organism>